<gene>
    <name evidence="1" type="primary">coaX</name>
    <name type="ordered locus">CT1408</name>
</gene>
<proteinExistence type="inferred from homology"/>
<feature type="chain" id="PRO_0000267509" description="Type III pantothenate kinase">
    <location>
        <begin position="1"/>
        <end position="270"/>
    </location>
</feature>
<feature type="active site" description="Proton acceptor" evidence="1">
    <location>
        <position position="118"/>
    </location>
</feature>
<feature type="binding site" evidence="1">
    <location>
        <begin position="19"/>
        <end position="26"/>
    </location>
    <ligand>
        <name>ATP</name>
        <dbReference type="ChEBI" id="CHEBI:30616"/>
    </ligand>
</feature>
<feature type="binding site" evidence="1">
    <location>
        <position position="109"/>
    </location>
    <ligand>
        <name>substrate</name>
    </ligand>
</feature>
<feature type="binding site" evidence="1">
    <location>
        <begin position="116"/>
        <end position="119"/>
    </location>
    <ligand>
        <name>substrate</name>
    </ligand>
</feature>
<feature type="binding site" evidence="1">
    <location>
        <position position="139"/>
    </location>
    <ligand>
        <name>K(+)</name>
        <dbReference type="ChEBI" id="CHEBI:29103"/>
    </ligand>
</feature>
<feature type="binding site" evidence="1">
    <location>
        <position position="142"/>
    </location>
    <ligand>
        <name>ATP</name>
        <dbReference type="ChEBI" id="CHEBI:30616"/>
    </ligand>
</feature>
<feature type="binding site" evidence="1">
    <location>
        <position position="194"/>
    </location>
    <ligand>
        <name>substrate</name>
    </ligand>
</feature>
<protein>
    <recommendedName>
        <fullName evidence="1">Type III pantothenate kinase</fullName>
        <ecNumber evidence="1">2.7.1.33</ecNumber>
    </recommendedName>
    <alternativeName>
        <fullName evidence="1">PanK-III</fullName>
    </alternativeName>
    <alternativeName>
        <fullName evidence="1">Pantothenic acid kinase</fullName>
    </alternativeName>
</protein>
<comment type="function">
    <text evidence="1">Catalyzes the phosphorylation of pantothenate (Pan), the first step in CoA biosynthesis.</text>
</comment>
<comment type="catalytic activity">
    <reaction evidence="1">
        <text>(R)-pantothenate + ATP = (R)-4'-phosphopantothenate + ADP + H(+)</text>
        <dbReference type="Rhea" id="RHEA:16373"/>
        <dbReference type="ChEBI" id="CHEBI:10986"/>
        <dbReference type="ChEBI" id="CHEBI:15378"/>
        <dbReference type="ChEBI" id="CHEBI:29032"/>
        <dbReference type="ChEBI" id="CHEBI:30616"/>
        <dbReference type="ChEBI" id="CHEBI:456216"/>
        <dbReference type="EC" id="2.7.1.33"/>
    </reaction>
</comment>
<comment type="cofactor">
    <cofactor evidence="1">
        <name>NH4(+)</name>
        <dbReference type="ChEBI" id="CHEBI:28938"/>
    </cofactor>
    <cofactor evidence="1">
        <name>K(+)</name>
        <dbReference type="ChEBI" id="CHEBI:29103"/>
    </cofactor>
    <text evidence="1">A monovalent cation. Ammonium or potassium.</text>
</comment>
<comment type="pathway">
    <text evidence="1">Cofactor biosynthesis; coenzyme A biosynthesis; CoA from (R)-pantothenate: step 1/5.</text>
</comment>
<comment type="subunit">
    <text evidence="1">Homodimer.</text>
</comment>
<comment type="subcellular location">
    <subcellularLocation>
        <location evidence="1">Cytoplasm</location>
    </subcellularLocation>
</comment>
<comment type="similarity">
    <text evidence="1">Belongs to the type III pantothenate kinase family.</text>
</comment>
<sequence length="270" mass="28825">MQSSRGARAADVPVRLVVDIGNTSTTLAIFTGDEEPSVESVPSALFADSSTMREVFGNMARKHGEPQAIAICSVVPSATAVGSALLESLFSVPVLTICCKLRFPFRLDYATPHTFGADRLALCAWSRHLFSEKPVIAVDIGTAITFDVLDTVGNYRGGLIMPGIDMMAGALHSRTAQLPQVRIDRPESLLGRSTTECIKSGVFWGVVKQIGGLVDAIRGDLVRDFGESTVEVIVTGGNSRIIVPEIGPVSVIDELAVLRGSDLLLRMNMP</sequence>
<dbReference type="EC" id="2.7.1.33" evidence="1"/>
<dbReference type="EMBL" id="AE006470">
    <property type="protein sequence ID" value="AAM72636.1"/>
    <property type="molecule type" value="Genomic_DNA"/>
</dbReference>
<dbReference type="RefSeq" id="NP_662294.1">
    <property type="nucleotide sequence ID" value="NC_002932.3"/>
</dbReference>
<dbReference type="RefSeq" id="WP_010933075.1">
    <property type="nucleotide sequence ID" value="NC_002932.3"/>
</dbReference>
<dbReference type="SMR" id="Q8KCK7"/>
<dbReference type="STRING" id="194439.CT1408"/>
<dbReference type="EnsemblBacteria" id="AAM72636">
    <property type="protein sequence ID" value="AAM72636"/>
    <property type="gene ID" value="CT1408"/>
</dbReference>
<dbReference type="KEGG" id="cte:CT1408"/>
<dbReference type="PATRIC" id="fig|194439.7.peg.1276"/>
<dbReference type="eggNOG" id="COG1521">
    <property type="taxonomic scope" value="Bacteria"/>
</dbReference>
<dbReference type="HOGENOM" id="CLU_066627_1_0_10"/>
<dbReference type="OrthoDB" id="9804707at2"/>
<dbReference type="UniPathway" id="UPA00241">
    <property type="reaction ID" value="UER00352"/>
</dbReference>
<dbReference type="Proteomes" id="UP000001007">
    <property type="component" value="Chromosome"/>
</dbReference>
<dbReference type="GO" id="GO:0005737">
    <property type="term" value="C:cytoplasm"/>
    <property type="evidence" value="ECO:0007669"/>
    <property type="project" value="UniProtKB-SubCell"/>
</dbReference>
<dbReference type="GO" id="GO:0005524">
    <property type="term" value="F:ATP binding"/>
    <property type="evidence" value="ECO:0007669"/>
    <property type="project" value="UniProtKB-UniRule"/>
</dbReference>
<dbReference type="GO" id="GO:0046872">
    <property type="term" value="F:metal ion binding"/>
    <property type="evidence" value="ECO:0007669"/>
    <property type="project" value="UniProtKB-KW"/>
</dbReference>
<dbReference type="GO" id="GO:0004594">
    <property type="term" value="F:pantothenate kinase activity"/>
    <property type="evidence" value="ECO:0007669"/>
    <property type="project" value="UniProtKB-UniRule"/>
</dbReference>
<dbReference type="GO" id="GO:0015937">
    <property type="term" value="P:coenzyme A biosynthetic process"/>
    <property type="evidence" value="ECO:0007669"/>
    <property type="project" value="UniProtKB-UniRule"/>
</dbReference>
<dbReference type="CDD" id="cd24015">
    <property type="entry name" value="ASKHA_NBD_PanK-III"/>
    <property type="match status" value="1"/>
</dbReference>
<dbReference type="Gene3D" id="3.30.420.40">
    <property type="match status" value="2"/>
</dbReference>
<dbReference type="HAMAP" id="MF_01274">
    <property type="entry name" value="Pantothen_kinase_3"/>
    <property type="match status" value="1"/>
</dbReference>
<dbReference type="InterPro" id="IPR043129">
    <property type="entry name" value="ATPase_NBD"/>
</dbReference>
<dbReference type="InterPro" id="IPR004619">
    <property type="entry name" value="Type_III_PanK"/>
</dbReference>
<dbReference type="NCBIfam" id="TIGR00671">
    <property type="entry name" value="baf"/>
    <property type="match status" value="1"/>
</dbReference>
<dbReference type="NCBIfam" id="NF009852">
    <property type="entry name" value="PRK13320.1-4"/>
    <property type="match status" value="1"/>
</dbReference>
<dbReference type="PANTHER" id="PTHR34265">
    <property type="entry name" value="TYPE III PANTOTHENATE KINASE"/>
    <property type="match status" value="1"/>
</dbReference>
<dbReference type="PANTHER" id="PTHR34265:SF1">
    <property type="entry name" value="TYPE III PANTOTHENATE KINASE"/>
    <property type="match status" value="1"/>
</dbReference>
<dbReference type="Pfam" id="PF03309">
    <property type="entry name" value="Pan_kinase"/>
    <property type="match status" value="1"/>
</dbReference>
<dbReference type="SUPFAM" id="SSF53067">
    <property type="entry name" value="Actin-like ATPase domain"/>
    <property type="match status" value="2"/>
</dbReference>
<reference key="1">
    <citation type="journal article" date="2002" name="Proc. Natl. Acad. Sci. U.S.A.">
        <title>The complete genome sequence of Chlorobium tepidum TLS, a photosynthetic, anaerobic, green-sulfur bacterium.</title>
        <authorList>
            <person name="Eisen J.A."/>
            <person name="Nelson K.E."/>
            <person name="Paulsen I.T."/>
            <person name="Heidelberg J.F."/>
            <person name="Wu M."/>
            <person name="Dodson R.J."/>
            <person name="DeBoy R.T."/>
            <person name="Gwinn M.L."/>
            <person name="Nelson W.C."/>
            <person name="Haft D.H."/>
            <person name="Hickey E.K."/>
            <person name="Peterson J.D."/>
            <person name="Durkin A.S."/>
            <person name="Kolonay J.F."/>
            <person name="Yang F."/>
            <person name="Holt I.E."/>
            <person name="Umayam L.A."/>
            <person name="Mason T.M."/>
            <person name="Brenner M."/>
            <person name="Shea T.P."/>
            <person name="Parksey D.S."/>
            <person name="Nierman W.C."/>
            <person name="Feldblyum T.V."/>
            <person name="Hansen C.L."/>
            <person name="Craven M.B."/>
            <person name="Radune D."/>
            <person name="Vamathevan J.J."/>
            <person name="Khouri H.M."/>
            <person name="White O."/>
            <person name="Gruber T.M."/>
            <person name="Ketchum K.A."/>
            <person name="Venter J.C."/>
            <person name="Tettelin H."/>
            <person name="Bryant D.A."/>
            <person name="Fraser C.M."/>
        </authorList>
    </citation>
    <scope>NUCLEOTIDE SEQUENCE [LARGE SCALE GENOMIC DNA]</scope>
    <source>
        <strain>ATCC 49652 / DSM 12025 / NBRC 103806 / TLS</strain>
    </source>
</reference>
<accession>Q8KCK7</accession>
<keyword id="KW-0067">ATP-binding</keyword>
<keyword id="KW-0173">Coenzyme A biosynthesis</keyword>
<keyword id="KW-0963">Cytoplasm</keyword>
<keyword id="KW-0418">Kinase</keyword>
<keyword id="KW-0479">Metal-binding</keyword>
<keyword id="KW-0547">Nucleotide-binding</keyword>
<keyword id="KW-0630">Potassium</keyword>
<keyword id="KW-1185">Reference proteome</keyword>
<keyword id="KW-0808">Transferase</keyword>
<name>COAX_CHLTE</name>
<organism>
    <name type="scientific">Chlorobaculum tepidum (strain ATCC 49652 / DSM 12025 / NBRC 103806 / TLS)</name>
    <name type="common">Chlorobium tepidum</name>
    <dbReference type="NCBI Taxonomy" id="194439"/>
    <lineage>
        <taxon>Bacteria</taxon>
        <taxon>Pseudomonadati</taxon>
        <taxon>Chlorobiota</taxon>
        <taxon>Chlorobiia</taxon>
        <taxon>Chlorobiales</taxon>
        <taxon>Chlorobiaceae</taxon>
        <taxon>Chlorobaculum</taxon>
    </lineage>
</organism>
<evidence type="ECO:0000255" key="1">
    <source>
        <dbReference type="HAMAP-Rule" id="MF_01274"/>
    </source>
</evidence>